<keyword id="KW-0028">Amino-acid biosynthesis</keyword>
<keyword id="KW-0032">Aminotransferase</keyword>
<keyword id="KW-0055">Arginine biosynthesis</keyword>
<keyword id="KW-0963">Cytoplasm</keyword>
<keyword id="KW-0663">Pyridoxal phosphate</keyword>
<keyword id="KW-1185">Reference proteome</keyword>
<keyword id="KW-0808">Transferase</keyword>
<accession>Q7V8L1</accession>
<comment type="catalytic activity">
    <reaction evidence="1">
        <text>N(2)-acetyl-L-ornithine + 2-oxoglutarate = N-acetyl-L-glutamate 5-semialdehyde + L-glutamate</text>
        <dbReference type="Rhea" id="RHEA:18049"/>
        <dbReference type="ChEBI" id="CHEBI:16810"/>
        <dbReference type="ChEBI" id="CHEBI:29123"/>
        <dbReference type="ChEBI" id="CHEBI:29985"/>
        <dbReference type="ChEBI" id="CHEBI:57805"/>
        <dbReference type="EC" id="2.6.1.11"/>
    </reaction>
</comment>
<comment type="cofactor">
    <cofactor evidence="1">
        <name>pyridoxal 5'-phosphate</name>
        <dbReference type="ChEBI" id="CHEBI:597326"/>
    </cofactor>
    <text evidence="1">Binds 1 pyridoxal phosphate per subunit.</text>
</comment>
<comment type="pathway">
    <text evidence="1">Amino-acid biosynthesis; L-arginine biosynthesis; N(2)-acetyl-L-ornithine from L-glutamate: step 4/4.</text>
</comment>
<comment type="subunit">
    <text evidence="1">Homodimer.</text>
</comment>
<comment type="subcellular location">
    <subcellularLocation>
        <location evidence="1">Cytoplasm</location>
    </subcellularLocation>
</comment>
<comment type="miscellaneous">
    <text evidence="1">May also have succinyldiaminopimelate aminotransferase activity, thus carrying out the corresponding step in lysine biosynthesis.</text>
</comment>
<comment type="similarity">
    <text evidence="1">Belongs to the class-III pyridoxal-phosphate-dependent aminotransferase family. ArgD subfamily.</text>
</comment>
<name>ARGD_PROMM</name>
<sequence length="418" mass="45677">MVDALDSKSSAFGHVGSSPTAPTAVMGTYKRFPVTLLRGKGCWVWDDHGHQYLDAVAGIATCALGHSDRALRRSLGQQLKQLQHVSNLYRIPEQEALAHWLVENSCADSVFFCNSGAEANEAAIKLARKHGHRRRGIDRPIILTANSSFHGRTLAAISATGQPNFHKGFEPMVEGFEFFPFNNLQAFEQQLNRLEAQGPSVAAVLIEPLQGEGGVNPGEAGFFRRLRELCSQHQILLIFDEVQVGMGRCGNWWGYQQLGIEPDAFTLAKGLGGGHAIGALLVKQHADLFEPGDHASTFGGNPFACKAALTVAKEIERRGLIAKVQQRGAQLREGLTDLVQRFPRQLKGVRGWGLLQGLVLQDESTFTAPNVAQAALEEKLLVIAAGPKVVRMVPPLIIKPSEIRQLLQRLEATLAHFR</sequence>
<organism>
    <name type="scientific">Prochlorococcus marinus (strain MIT 9313)</name>
    <dbReference type="NCBI Taxonomy" id="74547"/>
    <lineage>
        <taxon>Bacteria</taxon>
        <taxon>Bacillati</taxon>
        <taxon>Cyanobacteriota</taxon>
        <taxon>Cyanophyceae</taxon>
        <taxon>Synechococcales</taxon>
        <taxon>Prochlorococcaceae</taxon>
        <taxon>Prochlorococcus</taxon>
    </lineage>
</organism>
<dbReference type="EC" id="2.6.1.11" evidence="1"/>
<dbReference type="EMBL" id="BX548175">
    <property type="protein sequence ID" value="CAE20506.1"/>
    <property type="molecule type" value="Genomic_DNA"/>
</dbReference>
<dbReference type="SMR" id="Q7V8L1"/>
<dbReference type="KEGG" id="pmt:PMT_0331"/>
<dbReference type="eggNOG" id="COG4992">
    <property type="taxonomic scope" value="Bacteria"/>
</dbReference>
<dbReference type="HOGENOM" id="CLU_016922_10_1_3"/>
<dbReference type="UniPathway" id="UPA00068">
    <property type="reaction ID" value="UER00109"/>
</dbReference>
<dbReference type="Proteomes" id="UP000001423">
    <property type="component" value="Chromosome"/>
</dbReference>
<dbReference type="GO" id="GO:0005737">
    <property type="term" value="C:cytoplasm"/>
    <property type="evidence" value="ECO:0007669"/>
    <property type="project" value="UniProtKB-SubCell"/>
</dbReference>
<dbReference type="GO" id="GO:0042802">
    <property type="term" value="F:identical protein binding"/>
    <property type="evidence" value="ECO:0007669"/>
    <property type="project" value="TreeGrafter"/>
</dbReference>
<dbReference type="GO" id="GO:0003992">
    <property type="term" value="F:N2-acetyl-L-ornithine:2-oxoglutarate 5-aminotransferase activity"/>
    <property type="evidence" value="ECO:0007669"/>
    <property type="project" value="UniProtKB-UniRule"/>
</dbReference>
<dbReference type="GO" id="GO:0030170">
    <property type="term" value="F:pyridoxal phosphate binding"/>
    <property type="evidence" value="ECO:0007669"/>
    <property type="project" value="InterPro"/>
</dbReference>
<dbReference type="GO" id="GO:0006526">
    <property type="term" value="P:L-arginine biosynthetic process"/>
    <property type="evidence" value="ECO:0007669"/>
    <property type="project" value="UniProtKB-UniRule"/>
</dbReference>
<dbReference type="CDD" id="cd00610">
    <property type="entry name" value="OAT_like"/>
    <property type="match status" value="1"/>
</dbReference>
<dbReference type="FunFam" id="3.40.640.10:FF:000004">
    <property type="entry name" value="Acetylornithine aminotransferase"/>
    <property type="match status" value="1"/>
</dbReference>
<dbReference type="Gene3D" id="3.90.1150.10">
    <property type="entry name" value="Aspartate Aminotransferase, domain 1"/>
    <property type="match status" value="1"/>
</dbReference>
<dbReference type="Gene3D" id="3.40.640.10">
    <property type="entry name" value="Type I PLP-dependent aspartate aminotransferase-like (Major domain)"/>
    <property type="match status" value="1"/>
</dbReference>
<dbReference type="HAMAP" id="MF_01107">
    <property type="entry name" value="ArgD_aminotrans_3"/>
    <property type="match status" value="1"/>
</dbReference>
<dbReference type="InterPro" id="IPR004636">
    <property type="entry name" value="AcOrn/SuccOrn_fam"/>
</dbReference>
<dbReference type="InterPro" id="IPR005814">
    <property type="entry name" value="Aminotrans_3"/>
</dbReference>
<dbReference type="InterPro" id="IPR049704">
    <property type="entry name" value="Aminotrans_3_PPA_site"/>
</dbReference>
<dbReference type="InterPro" id="IPR050103">
    <property type="entry name" value="Class-III_PLP-dep_AT"/>
</dbReference>
<dbReference type="InterPro" id="IPR015424">
    <property type="entry name" value="PyrdxlP-dep_Trfase"/>
</dbReference>
<dbReference type="InterPro" id="IPR015421">
    <property type="entry name" value="PyrdxlP-dep_Trfase_major"/>
</dbReference>
<dbReference type="InterPro" id="IPR015422">
    <property type="entry name" value="PyrdxlP-dep_Trfase_small"/>
</dbReference>
<dbReference type="NCBIfam" id="TIGR00707">
    <property type="entry name" value="argD"/>
    <property type="match status" value="1"/>
</dbReference>
<dbReference type="NCBIfam" id="NF002325">
    <property type="entry name" value="PRK01278.1"/>
    <property type="match status" value="1"/>
</dbReference>
<dbReference type="PANTHER" id="PTHR11986:SF79">
    <property type="entry name" value="ACETYLORNITHINE AMINOTRANSFERASE, MITOCHONDRIAL"/>
    <property type="match status" value="1"/>
</dbReference>
<dbReference type="PANTHER" id="PTHR11986">
    <property type="entry name" value="AMINOTRANSFERASE CLASS III"/>
    <property type="match status" value="1"/>
</dbReference>
<dbReference type="Pfam" id="PF00202">
    <property type="entry name" value="Aminotran_3"/>
    <property type="match status" value="1"/>
</dbReference>
<dbReference type="PIRSF" id="PIRSF000521">
    <property type="entry name" value="Transaminase_4ab_Lys_Orn"/>
    <property type="match status" value="1"/>
</dbReference>
<dbReference type="SUPFAM" id="SSF53383">
    <property type="entry name" value="PLP-dependent transferases"/>
    <property type="match status" value="1"/>
</dbReference>
<dbReference type="PROSITE" id="PS00600">
    <property type="entry name" value="AA_TRANSFER_CLASS_3"/>
    <property type="match status" value="1"/>
</dbReference>
<evidence type="ECO:0000255" key="1">
    <source>
        <dbReference type="HAMAP-Rule" id="MF_01107"/>
    </source>
</evidence>
<gene>
    <name evidence="1" type="primary">argD</name>
    <name type="ordered locus">PMT_0331</name>
</gene>
<feature type="chain" id="PRO_0000112766" description="Acetylornithine aminotransferase">
    <location>
        <begin position="1"/>
        <end position="418"/>
    </location>
</feature>
<feature type="binding site" evidence="1">
    <location>
        <begin position="116"/>
        <end position="117"/>
    </location>
    <ligand>
        <name>pyridoxal 5'-phosphate</name>
        <dbReference type="ChEBI" id="CHEBI:597326"/>
    </ligand>
</feature>
<feature type="binding site" evidence="1">
    <location>
        <position position="149"/>
    </location>
    <ligand>
        <name>pyridoxal 5'-phosphate</name>
        <dbReference type="ChEBI" id="CHEBI:597326"/>
    </ligand>
</feature>
<feature type="binding site" evidence="1">
    <location>
        <position position="152"/>
    </location>
    <ligand>
        <name>N(2)-acetyl-L-ornithine</name>
        <dbReference type="ChEBI" id="CHEBI:57805"/>
    </ligand>
</feature>
<feature type="binding site" evidence="1">
    <location>
        <begin position="240"/>
        <end position="243"/>
    </location>
    <ligand>
        <name>pyridoxal 5'-phosphate</name>
        <dbReference type="ChEBI" id="CHEBI:597326"/>
    </ligand>
</feature>
<feature type="binding site" evidence="1">
    <location>
        <position position="296"/>
    </location>
    <ligand>
        <name>N(2)-acetyl-L-ornithine</name>
        <dbReference type="ChEBI" id="CHEBI:57805"/>
    </ligand>
</feature>
<feature type="binding site" evidence="1">
    <location>
        <position position="297"/>
    </location>
    <ligand>
        <name>pyridoxal 5'-phosphate</name>
        <dbReference type="ChEBI" id="CHEBI:597326"/>
    </ligand>
</feature>
<feature type="modified residue" description="N6-(pyridoxal phosphate)lysine" evidence="1">
    <location>
        <position position="269"/>
    </location>
</feature>
<proteinExistence type="inferred from homology"/>
<reference key="1">
    <citation type="journal article" date="2003" name="Nature">
        <title>Genome divergence in two Prochlorococcus ecotypes reflects oceanic niche differentiation.</title>
        <authorList>
            <person name="Rocap G."/>
            <person name="Larimer F.W."/>
            <person name="Lamerdin J.E."/>
            <person name="Malfatti S."/>
            <person name="Chain P."/>
            <person name="Ahlgren N.A."/>
            <person name="Arellano A."/>
            <person name="Coleman M."/>
            <person name="Hauser L."/>
            <person name="Hess W.R."/>
            <person name="Johnson Z.I."/>
            <person name="Land M.L."/>
            <person name="Lindell D."/>
            <person name="Post A.F."/>
            <person name="Regala W."/>
            <person name="Shah M."/>
            <person name="Shaw S.L."/>
            <person name="Steglich C."/>
            <person name="Sullivan M.B."/>
            <person name="Ting C.S."/>
            <person name="Tolonen A."/>
            <person name="Webb E.A."/>
            <person name="Zinser E.R."/>
            <person name="Chisholm S.W."/>
        </authorList>
    </citation>
    <scope>NUCLEOTIDE SEQUENCE [LARGE SCALE GENOMIC DNA]</scope>
    <source>
        <strain>MIT 9313</strain>
    </source>
</reference>
<protein>
    <recommendedName>
        <fullName evidence="1">Acetylornithine aminotransferase</fullName>
        <shortName evidence="1">ACOAT</shortName>
        <ecNumber evidence="1">2.6.1.11</ecNumber>
    </recommendedName>
</protein>